<name>Y970_MYCTO</name>
<evidence type="ECO:0000255" key="1"/>
<evidence type="ECO:0000305" key="2"/>
<comment type="subcellular location">
    <subcellularLocation>
        <location evidence="2">Cell membrane</location>
        <topology evidence="2">Multi-pass membrane protein</topology>
    </subcellularLocation>
</comment>
<keyword id="KW-1003">Cell membrane</keyword>
<keyword id="KW-0472">Membrane</keyword>
<keyword id="KW-1185">Reference proteome</keyword>
<keyword id="KW-0812">Transmembrane</keyword>
<keyword id="KW-1133">Transmembrane helix</keyword>
<gene>
    <name type="ordered locus">MT0998</name>
</gene>
<reference key="1">
    <citation type="journal article" date="2002" name="J. Bacteriol.">
        <title>Whole-genome comparison of Mycobacterium tuberculosis clinical and laboratory strains.</title>
        <authorList>
            <person name="Fleischmann R.D."/>
            <person name="Alland D."/>
            <person name="Eisen J.A."/>
            <person name="Carpenter L."/>
            <person name="White O."/>
            <person name="Peterson J.D."/>
            <person name="DeBoy R.T."/>
            <person name="Dodson R.J."/>
            <person name="Gwinn M.L."/>
            <person name="Haft D.H."/>
            <person name="Hickey E.K."/>
            <person name="Kolonay J.F."/>
            <person name="Nelson W.C."/>
            <person name="Umayam L.A."/>
            <person name="Ermolaeva M.D."/>
            <person name="Salzberg S.L."/>
            <person name="Delcher A."/>
            <person name="Utterback T.R."/>
            <person name="Weidman J.F."/>
            <person name="Khouri H.M."/>
            <person name="Gill J."/>
            <person name="Mikula A."/>
            <person name="Bishai W."/>
            <person name="Jacobs W.R. Jr."/>
            <person name="Venter J.C."/>
            <person name="Fraser C.M."/>
        </authorList>
    </citation>
    <scope>NUCLEOTIDE SEQUENCE [LARGE SCALE GENOMIC DNA]</scope>
    <source>
        <strain>CDC 1551 / Oshkosh</strain>
    </source>
</reference>
<dbReference type="EMBL" id="AE000516">
    <property type="protein sequence ID" value="AAK45247.1"/>
    <property type="molecule type" value="Genomic_DNA"/>
</dbReference>
<dbReference type="PIR" id="H70718">
    <property type="entry name" value="H70718"/>
</dbReference>
<dbReference type="RefSeq" id="WP_003898666.1">
    <property type="nucleotide sequence ID" value="NZ_KK341227.1"/>
</dbReference>
<dbReference type="KEGG" id="mtc:MT0998"/>
<dbReference type="PATRIC" id="fig|83331.31.peg.1070"/>
<dbReference type="HOGENOM" id="CLU_084456_0_0_11"/>
<dbReference type="Proteomes" id="UP000001020">
    <property type="component" value="Chromosome"/>
</dbReference>
<dbReference type="GO" id="GO:0005886">
    <property type="term" value="C:plasma membrane"/>
    <property type="evidence" value="ECO:0007669"/>
    <property type="project" value="UniProtKB-SubCell"/>
</dbReference>
<dbReference type="InterPro" id="IPR033458">
    <property type="entry name" value="DUF5134"/>
</dbReference>
<dbReference type="Pfam" id="PF17197">
    <property type="entry name" value="DUF5134"/>
    <property type="match status" value="1"/>
</dbReference>
<sequence length="210" mass="22887">MIHDLMLRWVVTGLFVLTAAECGLAIIAKRRPWTLIVNHGLHFAMAVAMAVMAWPWGARVPTTGPAVFFLLAAVWFGATAVVAVRGTATRGLYGYHGLMMLATAWMYAAMNPRLLPVRSCTEYATEPDGSMPAMDMTAMNMPPNSGSPIWFSAVNWIGTVGFAVAAVFWACRFVMERRQEATQSRLPGSIGQAMMAAGMAMLFFAMLFPV</sequence>
<accession>P9WKL6</accession>
<accession>L0T6Y4</accession>
<accession>P64781</accession>
<accession>P71541</accession>
<protein>
    <recommendedName>
        <fullName>Uncharacterized protein MT0998</fullName>
    </recommendedName>
</protein>
<feature type="chain" id="PRO_0000427632" description="Uncharacterized protein MT0998">
    <location>
        <begin position="1"/>
        <end position="210"/>
    </location>
</feature>
<feature type="transmembrane region" description="Helical" evidence="1">
    <location>
        <begin position="9"/>
        <end position="29"/>
    </location>
</feature>
<feature type="transmembrane region" description="Helical" evidence="1">
    <location>
        <begin position="35"/>
        <end position="55"/>
    </location>
</feature>
<feature type="transmembrane region" description="Helical" evidence="1">
    <location>
        <begin position="64"/>
        <end position="84"/>
    </location>
</feature>
<feature type="transmembrane region" description="Helical" evidence="1">
    <location>
        <begin position="91"/>
        <end position="111"/>
    </location>
</feature>
<feature type="transmembrane region" description="Helical" evidence="1">
    <location>
        <begin position="149"/>
        <end position="169"/>
    </location>
</feature>
<feature type="transmembrane region" description="Helical" evidence="1">
    <location>
        <begin position="190"/>
        <end position="210"/>
    </location>
</feature>
<proteinExistence type="predicted"/>
<organism>
    <name type="scientific">Mycobacterium tuberculosis (strain CDC 1551 / Oshkosh)</name>
    <dbReference type="NCBI Taxonomy" id="83331"/>
    <lineage>
        <taxon>Bacteria</taxon>
        <taxon>Bacillati</taxon>
        <taxon>Actinomycetota</taxon>
        <taxon>Actinomycetes</taxon>
        <taxon>Mycobacteriales</taxon>
        <taxon>Mycobacteriaceae</taxon>
        <taxon>Mycobacterium</taxon>
        <taxon>Mycobacterium tuberculosis complex</taxon>
    </lineage>
</organism>